<protein>
    <recommendedName>
        <fullName evidence="1">Sugar fermentation stimulation protein homolog</fullName>
    </recommendedName>
</protein>
<accession>Q8G034</accession>
<accession>G0KAP0</accession>
<gene>
    <name evidence="1" type="primary">sfsA</name>
    <name type="ordered locus">BR1281</name>
    <name type="ordered locus">BS1330_I1277</name>
</gene>
<reference key="1">
    <citation type="journal article" date="2002" name="Proc. Natl. Acad. Sci. U.S.A.">
        <title>The Brucella suis genome reveals fundamental similarities between animal and plant pathogens and symbionts.</title>
        <authorList>
            <person name="Paulsen I.T."/>
            <person name="Seshadri R."/>
            <person name="Nelson K.E."/>
            <person name="Eisen J.A."/>
            <person name="Heidelberg J.F."/>
            <person name="Read T.D."/>
            <person name="Dodson R.J."/>
            <person name="Umayam L.A."/>
            <person name="Brinkac L.M."/>
            <person name="Beanan M.J."/>
            <person name="Daugherty S.C."/>
            <person name="DeBoy R.T."/>
            <person name="Durkin A.S."/>
            <person name="Kolonay J.F."/>
            <person name="Madupu R."/>
            <person name="Nelson W.C."/>
            <person name="Ayodeji B."/>
            <person name="Kraul M."/>
            <person name="Shetty J."/>
            <person name="Malek J.A."/>
            <person name="Van Aken S.E."/>
            <person name="Riedmuller S."/>
            <person name="Tettelin H."/>
            <person name="Gill S.R."/>
            <person name="White O."/>
            <person name="Salzberg S.L."/>
            <person name="Hoover D.L."/>
            <person name="Lindler L.E."/>
            <person name="Halling S.M."/>
            <person name="Boyle S.M."/>
            <person name="Fraser C.M."/>
        </authorList>
    </citation>
    <scope>NUCLEOTIDE SEQUENCE [LARGE SCALE GENOMIC DNA]</scope>
    <source>
        <strain>1330</strain>
    </source>
</reference>
<reference key="2">
    <citation type="journal article" date="2011" name="J. Bacteriol.">
        <title>Revised genome sequence of Brucella suis 1330.</title>
        <authorList>
            <person name="Tae H."/>
            <person name="Shallom S."/>
            <person name="Settlage R."/>
            <person name="Preston D."/>
            <person name="Adams L.G."/>
            <person name="Garner H.R."/>
        </authorList>
    </citation>
    <scope>NUCLEOTIDE SEQUENCE [LARGE SCALE GENOMIC DNA]</scope>
    <source>
        <strain>1330</strain>
    </source>
</reference>
<comment type="similarity">
    <text evidence="1">Belongs to the SfsA family.</text>
</comment>
<evidence type="ECO:0000255" key="1">
    <source>
        <dbReference type="HAMAP-Rule" id="MF_00095"/>
    </source>
</evidence>
<organism>
    <name type="scientific">Brucella suis biovar 1 (strain 1330)</name>
    <dbReference type="NCBI Taxonomy" id="204722"/>
    <lineage>
        <taxon>Bacteria</taxon>
        <taxon>Pseudomonadati</taxon>
        <taxon>Pseudomonadota</taxon>
        <taxon>Alphaproteobacteria</taxon>
        <taxon>Hyphomicrobiales</taxon>
        <taxon>Brucellaceae</taxon>
        <taxon>Brucella/Ochrobactrum group</taxon>
        <taxon>Brucella</taxon>
    </lineage>
</organism>
<dbReference type="EMBL" id="AE014291">
    <property type="protein sequence ID" value="AAN30199.1"/>
    <property type="molecule type" value="Genomic_DNA"/>
</dbReference>
<dbReference type="EMBL" id="CP002997">
    <property type="protein sequence ID" value="AEM18617.1"/>
    <property type="molecule type" value="Genomic_DNA"/>
</dbReference>
<dbReference type="RefSeq" id="WP_002964399.1">
    <property type="nucleotide sequence ID" value="NZ_KN046804.1"/>
</dbReference>
<dbReference type="SMR" id="Q8G034"/>
<dbReference type="GeneID" id="97533485"/>
<dbReference type="KEGG" id="bms:BR1281"/>
<dbReference type="KEGG" id="bsi:BS1330_I1277"/>
<dbReference type="PATRIC" id="fig|204722.21.peg.3699"/>
<dbReference type="HOGENOM" id="CLU_052299_2_0_5"/>
<dbReference type="PhylomeDB" id="Q8G034"/>
<dbReference type="Proteomes" id="UP000007104">
    <property type="component" value="Chromosome I"/>
</dbReference>
<dbReference type="GO" id="GO:0003677">
    <property type="term" value="F:DNA binding"/>
    <property type="evidence" value="ECO:0007669"/>
    <property type="project" value="InterPro"/>
</dbReference>
<dbReference type="CDD" id="cd22359">
    <property type="entry name" value="SfsA-like_bacterial"/>
    <property type="match status" value="1"/>
</dbReference>
<dbReference type="Gene3D" id="2.40.50.580">
    <property type="match status" value="1"/>
</dbReference>
<dbReference type="Gene3D" id="3.40.1350.60">
    <property type="match status" value="1"/>
</dbReference>
<dbReference type="HAMAP" id="MF_00095">
    <property type="entry name" value="SfsA"/>
    <property type="match status" value="1"/>
</dbReference>
<dbReference type="InterPro" id="IPR005224">
    <property type="entry name" value="SfsA"/>
</dbReference>
<dbReference type="InterPro" id="IPR040452">
    <property type="entry name" value="SfsA_C"/>
</dbReference>
<dbReference type="InterPro" id="IPR041465">
    <property type="entry name" value="SfsA_N"/>
</dbReference>
<dbReference type="NCBIfam" id="TIGR00230">
    <property type="entry name" value="sfsA"/>
    <property type="match status" value="1"/>
</dbReference>
<dbReference type="PANTHER" id="PTHR30545">
    <property type="entry name" value="SUGAR FERMENTATION STIMULATION PROTEIN A"/>
    <property type="match status" value="1"/>
</dbReference>
<dbReference type="PANTHER" id="PTHR30545:SF2">
    <property type="entry name" value="SUGAR FERMENTATION STIMULATION PROTEIN A"/>
    <property type="match status" value="1"/>
</dbReference>
<dbReference type="Pfam" id="PF03749">
    <property type="entry name" value="SfsA"/>
    <property type="match status" value="1"/>
</dbReference>
<dbReference type="Pfam" id="PF17746">
    <property type="entry name" value="SfsA_N"/>
    <property type="match status" value="1"/>
</dbReference>
<feature type="chain" id="PRO_0000152275" description="Sugar fermentation stimulation protein homolog">
    <location>
        <begin position="1"/>
        <end position="238"/>
    </location>
</feature>
<proteinExistence type="inferred from homology"/>
<sequence length="238" mass="26440">MLFPTPLISGRLERRYKRFLADVTLDDGRFITASVPNTGSMLGLTAPGSRVWLSFSDAPHRKYAHTLQIVEADNTLVGVNTGLPNRIAEEAILKGLIPDLDGYATLKREQKYGRNSRIDLLLDDGPRPRAYVEVKNVHFIRTPGLAEFPDTVTARGAKHLDELVDVVAAGHRGIMLFIIQRADCSRFGISGDLDPFYARAFERAIASGVEAWAVRCHITENGIDATELVPIEDMRRIE</sequence>
<name>SFSA_BRUSU</name>